<accession>Q9LQK9</accession>
<accession>Q1PFP9</accession>
<evidence type="ECO:0000250" key="1">
    <source>
        <dbReference type="UniProtKB" id="P93032"/>
    </source>
</evidence>
<evidence type="ECO:0000303" key="2">
    <source>
    </source>
</evidence>
<evidence type="ECO:0000305" key="3"/>
<name>IDH4_ARATH</name>
<keyword id="KW-0025">Alternative splicing</keyword>
<keyword id="KW-1185">Reference proteome</keyword>
<comment type="function">
    <text evidence="1">Performs an essential role in the oxidative function of the citric acid cycle.</text>
</comment>
<comment type="alternative products">
    <event type="alternative splicing"/>
    <isoform>
        <id>Q9LQK9-1</id>
        <name>1</name>
        <sequence type="displayed"/>
    </isoform>
    <isoform>
        <id>Q9LQK9-2</id>
        <name>2</name>
        <sequence type="described" ref="VSP_022292 VSP_022293"/>
    </isoform>
</comment>
<comment type="miscellaneous">
    <molecule>Isoform 2</molecule>
    <text evidence="3">May be due to an intron retention.</text>
</comment>
<comment type="similarity">
    <text evidence="3">Belongs to the isocitrate and isopropylmalate dehydrogenases family.</text>
</comment>
<comment type="caution">
    <text evidence="3">Lacks the isocitrate binding site which is one of the conserved features of the isocitrate dehydrogenase family.</text>
</comment>
<comment type="caution">
    <text evidence="3">Could be the product of a pseudogene.</text>
</comment>
<proteinExistence type="uncertain"/>
<protein>
    <recommendedName>
        <fullName>Putative isocitrate dehydrogenase [NAD] subunit-like 4</fullName>
    </recommendedName>
    <alternativeName>
        <fullName>IDH-IV</fullName>
    </alternativeName>
    <alternativeName>
        <fullName>Isocitric dehydrogenase-like protein 4</fullName>
    </alternativeName>
    <alternativeName>
        <fullName>NAD(+)-specific ICDH 4</fullName>
    </alternativeName>
</protein>
<gene>
    <name type="primary">IDH4</name>
    <name type="ordered locus">At1g32480</name>
    <name type="ORF">F5D14.26</name>
</gene>
<sequence length="294" mass="32851">MPRPVTVIDSNVTNAVHQVMDAMQAPVYFETYIIKGKNMNHLTWEVVDSIRKNKVCLNGRVNNSLCGGARKELDLFASLVDCFNLNGQPSRHENVDIVVIRENTEGEYAGREHEVVPGVIESFQVTMTKFWSDRIAKYAFEYAHFSKRKKVTAVHNNGKYEKLADAFFLESCQEVAKMYPNITYNEIASRETRAIRRHSNSKSLWAIIANIASGVAGGSFGDDYAIFEQVGSVGNHKNPVALLFSSVMMLRHLLLPLFADRLKTAVTRVISEGKCGNSNTTTQEVVDSVIANLD</sequence>
<dbReference type="EMBL" id="AC007767">
    <property type="protein sequence ID" value="AAF81346.1"/>
    <property type="molecule type" value="Genomic_DNA"/>
</dbReference>
<dbReference type="EMBL" id="CP002684">
    <property type="protein sequence ID" value="AEE31491.1"/>
    <property type="molecule type" value="Genomic_DNA"/>
</dbReference>
<dbReference type="EMBL" id="DQ446314">
    <property type="protein sequence ID" value="ABE65678.1"/>
    <property type="molecule type" value="mRNA"/>
</dbReference>
<dbReference type="PIR" id="B86450">
    <property type="entry name" value="B86450"/>
</dbReference>
<dbReference type="RefSeq" id="NP_174526.2">
    <molecule id="Q9LQK9-2"/>
    <property type="nucleotide sequence ID" value="NM_102983.2"/>
</dbReference>
<dbReference type="SMR" id="Q9LQK9"/>
<dbReference type="BioGRID" id="25376">
    <property type="interactions" value="1"/>
</dbReference>
<dbReference type="FunCoup" id="Q9LQK9">
    <property type="interactions" value="421"/>
</dbReference>
<dbReference type="STRING" id="3702.Q9LQK9"/>
<dbReference type="PaxDb" id="3702-AT1G32480.1"/>
<dbReference type="PeptideAtlas" id="Q9LQK9"/>
<dbReference type="EnsemblPlants" id="AT1G32480.1">
    <molecule id="Q9LQK9-2"/>
    <property type="protein sequence ID" value="AT1G32480.1"/>
    <property type="gene ID" value="AT1G32480"/>
</dbReference>
<dbReference type="GeneID" id="840142"/>
<dbReference type="Gramene" id="AT1G32480.1">
    <molecule id="Q9LQK9-2"/>
    <property type="protein sequence ID" value="AT1G32480.1"/>
    <property type="gene ID" value="AT1G32480"/>
</dbReference>
<dbReference type="KEGG" id="ath:AT1G32480"/>
<dbReference type="Araport" id="AT1G32480"/>
<dbReference type="TAIR" id="AT1G32480">
    <property type="gene designation" value="IDH-IV"/>
</dbReference>
<dbReference type="eggNOG" id="KOG0784">
    <property type="taxonomic scope" value="Eukaryota"/>
</dbReference>
<dbReference type="InParanoid" id="Q9LQK9"/>
<dbReference type="OMA" id="EYAGREH"/>
<dbReference type="PhylomeDB" id="Q9LQK9"/>
<dbReference type="BioCyc" id="ARA:AT1G32480-MONOMER"/>
<dbReference type="Proteomes" id="UP000006548">
    <property type="component" value="Chromosome 1"/>
</dbReference>
<dbReference type="ExpressionAtlas" id="Q9LQK9">
    <property type="expression patterns" value="baseline and differential"/>
</dbReference>
<dbReference type="Gene3D" id="3.40.718.10">
    <property type="entry name" value="Isopropylmalate Dehydrogenase"/>
    <property type="match status" value="1"/>
</dbReference>
<dbReference type="InterPro" id="IPR024084">
    <property type="entry name" value="IsoPropMal-DH-like_dom"/>
</dbReference>
<dbReference type="PANTHER" id="PTHR11835">
    <property type="entry name" value="DECARBOXYLATING DEHYDROGENASES-ISOCITRATE, ISOPROPYLMALATE, TARTRATE"/>
    <property type="match status" value="1"/>
</dbReference>
<dbReference type="PANTHER" id="PTHR11835:SF80">
    <property type="entry name" value="ISOCITRATE DEHYDROGENASE [NAD] REGULATORY SUBUNIT 1, MITOCHONDRIAL-RELATED"/>
    <property type="match status" value="1"/>
</dbReference>
<dbReference type="Pfam" id="PF00180">
    <property type="entry name" value="Iso_dh"/>
    <property type="match status" value="1"/>
</dbReference>
<dbReference type="SMART" id="SM01329">
    <property type="entry name" value="Iso_dh"/>
    <property type="match status" value="1"/>
</dbReference>
<dbReference type="SUPFAM" id="SSF53659">
    <property type="entry name" value="Isocitrate/Isopropylmalate dehydrogenase-like"/>
    <property type="match status" value="1"/>
</dbReference>
<feature type="chain" id="PRO_0000271290" description="Putative isocitrate dehydrogenase [NAD] subunit-like 4">
    <location>
        <begin position="1"/>
        <end position="294"/>
    </location>
</feature>
<feature type="splice variant" id="VSP_022292" description="In isoform 2." evidence="2">
    <original>ASRETRAIRRHSNSKSLWAIIANIASG</original>
    <variation>GINNCCLQLVEKPERFDVIVTPNLYGL</variation>
    <location>
        <begin position="188"/>
        <end position="214"/>
    </location>
</feature>
<feature type="splice variant" id="VSP_022293" description="In isoform 2." evidence="2">
    <location>
        <begin position="215"/>
        <end position="294"/>
    </location>
</feature>
<reference key="1">
    <citation type="journal article" date="2000" name="Nature">
        <title>Sequence and analysis of chromosome 1 of the plant Arabidopsis thaliana.</title>
        <authorList>
            <person name="Theologis A."/>
            <person name="Ecker J.R."/>
            <person name="Palm C.J."/>
            <person name="Federspiel N.A."/>
            <person name="Kaul S."/>
            <person name="White O."/>
            <person name="Alonso J."/>
            <person name="Altafi H."/>
            <person name="Araujo R."/>
            <person name="Bowman C.L."/>
            <person name="Brooks S.Y."/>
            <person name="Buehler E."/>
            <person name="Chan A."/>
            <person name="Chao Q."/>
            <person name="Chen H."/>
            <person name="Cheuk R.F."/>
            <person name="Chin C.W."/>
            <person name="Chung M.K."/>
            <person name="Conn L."/>
            <person name="Conway A.B."/>
            <person name="Conway A.R."/>
            <person name="Creasy T.H."/>
            <person name="Dewar K."/>
            <person name="Dunn P."/>
            <person name="Etgu P."/>
            <person name="Feldblyum T.V."/>
            <person name="Feng J.-D."/>
            <person name="Fong B."/>
            <person name="Fujii C.Y."/>
            <person name="Gill J.E."/>
            <person name="Goldsmith A.D."/>
            <person name="Haas B."/>
            <person name="Hansen N.F."/>
            <person name="Hughes B."/>
            <person name="Huizar L."/>
            <person name="Hunter J.L."/>
            <person name="Jenkins J."/>
            <person name="Johnson-Hopson C."/>
            <person name="Khan S."/>
            <person name="Khaykin E."/>
            <person name="Kim C.J."/>
            <person name="Koo H.L."/>
            <person name="Kremenetskaia I."/>
            <person name="Kurtz D.B."/>
            <person name="Kwan A."/>
            <person name="Lam B."/>
            <person name="Langin-Hooper S."/>
            <person name="Lee A."/>
            <person name="Lee J.M."/>
            <person name="Lenz C.A."/>
            <person name="Li J.H."/>
            <person name="Li Y.-P."/>
            <person name="Lin X."/>
            <person name="Liu S.X."/>
            <person name="Liu Z.A."/>
            <person name="Luros J.S."/>
            <person name="Maiti R."/>
            <person name="Marziali A."/>
            <person name="Militscher J."/>
            <person name="Miranda M."/>
            <person name="Nguyen M."/>
            <person name="Nierman W.C."/>
            <person name="Osborne B.I."/>
            <person name="Pai G."/>
            <person name="Peterson J."/>
            <person name="Pham P.K."/>
            <person name="Rizzo M."/>
            <person name="Rooney T."/>
            <person name="Rowley D."/>
            <person name="Sakano H."/>
            <person name="Salzberg S.L."/>
            <person name="Schwartz J.R."/>
            <person name="Shinn P."/>
            <person name="Southwick A.M."/>
            <person name="Sun H."/>
            <person name="Tallon L.J."/>
            <person name="Tambunga G."/>
            <person name="Toriumi M.J."/>
            <person name="Town C.D."/>
            <person name="Utterback T."/>
            <person name="Van Aken S."/>
            <person name="Vaysberg M."/>
            <person name="Vysotskaia V.S."/>
            <person name="Walker M."/>
            <person name="Wu D."/>
            <person name="Yu G."/>
            <person name="Fraser C.M."/>
            <person name="Venter J.C."/>
            <person name="Davis R.W."/>
        </authorList>
    </citation>
    <scope>NUCLEOTIDE SEQUENCE [LARGE SCALE GENOMIC DNA]</scope>
    <source>
        <strain>cv. Columbia</strain>
    </source>
</reference>
<reference key="2">
    <citation type="journal article" date="2017" name="Plant J.">
        <title>Araport11: a complete reannotation of the Arabidopsis thaliana reference genome.</title>
        <authorList>
            <person name="Cheng C.Y."/>
            <person name="Krishnakumar V."/>
            <person name="Chan A.P."/>
            <person name="Thibaud-Nissen F."/>
            <person name="Schobel S."/>
            <person name="Town C.D."/>
        </authorList>
    </citation>
    <scope>GENOME REANNOTATION</scope>
    <source>
        <strain>cv. Columbia</strain>
    </source>
</reference>
<reference key="3">
    <citation type="journal article" date="2006" name="Plant Biotechnol. J.">
        <title>Simultaneous high-throughput recombinational cloning of open reading frames in closed and open configurations.</title>
        <authorList>
            <person name="Underwood B.A."/>
            <person name="Vanderhaeghen R."/>
            <person name="Whitford R."/>
            <person name="Town C.D."/>
            <person name="Hilson P."/>
        </authorList>
    </citation>
    <scope>NUCLEOTIDE SEQUENCE [LARGE SCALE MRNA] (ISOFORM 2)</scope>
    <source>
        <strain>cv. Columbia</strain>
    </source>
</reference>
<reference key="4">
    <citation type="journal article" date="2004" name="Plant Sci.">
        <title>Characterization of a mutation in the IDH-II subunit of the NAD(+)-dependent isocitrate dehydrogenase from Arabidopsis thaliana.</title>
        <authorList>
            <person name="Lin M."/>
            <person name="Behal R.H."/>
            <person name="Oliver D.J."/>
        </authorList>
        <dbReference type="AGRICOLA" id="IND43633651"/>
    </citation>
    <scope>GENE FAMILY</scope>
</reference>
<organism>
    <name type="scientific">Arabidopsis thaliana</name>
    <name type="common">Mouse-ear cress</name>
    <dbReference type="NCBI Taxonomy" id="3702"/>
    <lineage>
        <taxon>Eukaryota</taxon>
        <taxon>Viridiplantae</taxon>
        <taxon>Streptophyta</taxon>
        <taxon>Embryophyta</taxon>
        <taxon>Tracheophyta</taxon>
        <taxon>Spermatophyta</taxon>
        <taxon>Magnoliopsida</taxon>
        <taxon>eudicotyledons</taxon>
        <taxon>Gunneridae</taxon>
        <taxon>Pentapetalae</taxon>
        <taxon>rosids</taxon>
        <taxon>malvids</taxon>
        <taxon>Brassicales</taxon>
        <taxon>Brassicaceae</taxon>
        <taxon>Camelineae</taxon>
        <taxon>Arabidopsis</taxon>
    </lineage>
</organism>